<name>TRPD_BUCDN</name>
<organism>
    <name type="scientific">Buchnera aphidicola subsp. Diuraphis noxia</name>
    <dbReference type="NCBI Taxonomy" id="118101"/>
    <lineage>
        <taxon>Bacteria</taxon>
        <taxon>Pseudomonadati</taxon>
        <taxon>Pseudomonadota</taxon>
        <taxon>Gammaproteobacteria</taxon>
        <taxon>Enterobacterales</taxon>
        <taxon>Erwiniaceae</taxon>
        <taxon>Buchnera</taxon>
    </lineage>
</organism>
<evidence type="ECO:0000255" key="1">
    <source>
        <dbReference type="HAMAP-Rule" id="MF_00211"/>
    </source>
</evidence>
<dbReference type="EC" id="2.4.2.18" evidence="1"/>
<dbReference type="EMBL" id="AF038565">
    <property type="protein sequence ID" value="AAC27733.1"/>
    <property type="molecule type" value="Genomic_DNA"/>
</dbReference>
<dbReference type="SMR" id="O68426"/>
<dbReference type="STRING" id="118101.ATN01_01390"/>
<dbReference type="UniPathway" id="UPA00035">
    <property type="reaction ID" value="UER00041"/>
</dbReference>
<dbReference type="GO" id="GO:0005829">
    <property type="term" value="C:cytosol"/>
    <property type="evidence" value="ECO:0007669"/>
    <property type="project" value="TreeGrafter"/>
</dbReference>
<dbReference type="GO" id="GO:0004048">
    <property type="term" value="F:anthranilate phosphoribosyltransferase activity"/>
    <property type="evidence" value="ECO:0007669"/>
    <property type="project" value="UniProtKB-UniRule"/>
</dbReference>
<dbReference type="GO" id="GO:0000287">
    <property type="term" value="F:magnesium ion binding"/>
    <property type="evidence" value="ECO:0007669"/>
    <property type="project" value="UniProtKB-UniRule"/>
</dbReference>
<dbReference type="GO" id="GO:0000162">
    <property type="term" value="P:L-tryptophan biosynthetic process"/>
    <property type="evidence" value="ECO:0007669"/>
    <property type="project" value="UniProtKB-UniRule"/>
</dbReference>
<dbReference type="Gene3D" id="3.40.1030.10">
    <property type="entry name" value="Nucleoside phosphorylase/phosphoribosyltransferase catalytic domain"/>
    <property type="match status" value="1"/>
</dbReference>
<dbReference type="Gene3D" id="1.20.970.10">
    <property type="entry name" value="Transferase, Pyrimidine Nucleoside Phosphorylase, Chain C"/>
    <property type="match status" value="1"/>
</dbReference>
<dbReference type="HAMAP" id="MF_00211">
    <property type="entry name" value="TrpD"/>
    <property type="match status" value="1"/>
</dbReference>
<dbReference type="InterPro" id="IPR005940">
    <property type="entry name" value="Anthranilate_Pribosyl_Tfrase"/>
</dbReference>
<dbReference type="InterPro" id="IPR000312">
    <property type="entry name" value="Glycosyl_Trfase_fam3"/>
</dbReference>
<dbReference type="InterPro" id="IPR017459">
    <property type="entry name" value="Glycosyl_Trfase_fam3_N_dom"/>
</dbReference>
<dbReference type="InterPro" id="IPR036320">
    <property type="entry name" value="Glycosyl_Trfase_fam3_N_dom_sf"/>
</dbReference>
<dbReference type="InterPro" id="IPR035902">
    <property type="entry name" value="Nuc_phospho_transferase"/>
</dbReference>
<dbReference type="NCBIfam" id="TIGR01245">
    <property type="entry name" value="trpD"/>
    <property type="match status" value="1"/>
</dbReference>
<dbReference type="PANTHER" id="PTHR43285">
    <property type="entry name" value="ANTHRANILATE PHOSPHORIBOSYLTRANSFERASE"/>
    <property type="match status" value="1"/>
</dbReference>
<dbReference type="PANTHER" id="PTHR43285:SF2">
    <property type="entry name" value="ANTHRANILATE PHOSPHORIBOSYLTRANSFERASE"/>
    <property type="match status" value="1"/>
</dbReference>
<dbReference type="Pfam" id="PF02885">
    <property type="entry name" value="Glycos_trans_3N"/>
    <property type="match status" value="1"/>
</dbReference>
<dbReference type="Pfam" id="PF00591">
    <property type="entry name" value="Glycos_transf_3"/>
    <property type="match status" value="1"/>
</dbReference>
<dbReference type="SUPFAM" id="SSF52418">
    <property type="entry name" value="Nucleoside phosphorylase/phosphoribosyltransferase catalytic domain"/>
    <property type="match status" value="1"/>
</dbReference>
<dbReference type="SUPFAM" id="SSF47648">
    <property type="entry name" value="Nucleoside phosphorylase/phosphoribosyltransferase N-terminal domain"/>
    <property type="match status" value="1"/>
</dbReference>
<reference key="1">
    <citation type="journal article" date="1998" name="Curr. Microbiol.">
        <title>The endosymbiont (Buchnera) of the aphid Diuraphis noxia contains all the genes of the tryptophan biosynthetic pathway.</title>
        <authorList>
            <person name="Baumann L."/>
            <person name="Baumann P."/>
            <person name="Moran N.A."/>
        </authorList>
    </citation>
    <scope>NUCLEOTIDE SEQUENCE [GENOMIC DNA]</scope>
</reference>
<proteinExistence type="inferred from homology"/>
<gene>
    <name evidence="1" type="primary">trpD</name>
</gene>
<sequence length="335" mass="37711">MQNILNKIYQSQHLNKEESYRLFKSISSGSITDITLSSILTAMKIRGESKEEIIGAILAFSECVKYFPKPNYVFLDIVGTGGDIKNTINISTASAFVAASCGLKIVKHCNQGVSSTSGSADLLKRFHINLHASSKEHRKTLDKLNICFLFAPKYHDSFKYSNNVRKILKTRTIFNLLGPFLNPAIPPLALIGVYKKDLLYSSIEILKSLKYQRAIVLHGDGTDEVTLHNTTHVAELFNGKIFSYELHPKDFGLKIHDKKIFTKTSLEENYYIINQIMKGKGDKLNEELIAANVAILFKIFGYEDLKSNTKLALNKIRSGDVYKHIINVANMLKED</sequence>
<keyword id="KW-0028">Amino-acid biosynthesis</keyword>
<keyword id="KW-0057">Aromatic amino acid biosynthesis</keyword>
<keyword id="KW-0328">Glycosyltransferase</keyword>
<keyword id="KW-0460">Magnesium</keyword>
<keyword id="KW-0479">Metal-binding</keyword>
<keyword id="KW-0808">Transferase</keyword>
<keyword id="KW-0822">Tryptophan biosynthesis</keyword>
<feature type="chain" id="PRO_0000154437" description="Anthranilate phosphoribosyltransferase">
    <location>
        <begin position="1"/>
        <end position="335"/>
    </location>
</feature>
<feature type="binding site" evidence="1">
    <location>
        <position position="79"/>
    </location>
    <ligand>
        <name>5-phospho-alpha-D-ribose 1-diphosphate</name>
        <dbReference type="ChEBI" id="CHEBI:58017"/>
    </ligand>
</feature>
<feature type="binding site" evidence="1">
    <location>
        <position position="79"/>
    </location>
    <ligand>
        <name>anthranilate</name>
        <dbReference type="ChEBI" id="CHEBI:16567"/>
        <label>1</label>
    </ligand>
</feature>
<feature type="binding site" evidence="1">
    <location>
        <begin position="82"/>
        <end position="83"/>
    </location>
    <ligand>
        <name>5-phospho-alpha-D-ribose 1-diphosphate</name>
        <dbReference type="ChEBI" id="CHEBI:58017"/>
    </ligand>
</feature>
<feature type="binding site" evidence="1">
    <location>
        <position position="87"/>
    </location>
    <ligand>
        <name>5-phospho-alpha-D-ribose 1-diphosphate</name>
        <dbReference type="ChEBI" id="CHEBI:58017"/>
    </ligand>
</feature>
<feature type="binding site" evidence="1">
    <location>
        <begin position="89"/>
        <end position="92"/>
    </location>
    <ligand>
        <name>5-phospho-alpha-D-ribose 1-diphosphate</name>
        <dbReference type="ChEBI" id="CHEBI:58017"/>
    </ligand>
</feature>
<feature type="binding site" evidence="1">
    <location>
        <position position="91"/>
    </location>
    <ligand>
        <name>Mg(2+)</name>
        <dbReference type="ChEBI" id="CHEBI:18420"/>
        <label>1</label>
    </ligand>
</feature>
<feature type="binding site" evidence="1">
    <location>
        <begin position="107"/>
        <end position="115"/>
    </location>
    <ligand>
        <name>5-phospho-alpha-D-ribose 1-diphosphate</name>
        <dbReference type="ChEBI" id="CHEBI:58017"/>
    </ligand>
</feature>
<feature type="binding site" evidence="1">
    <location>
        <position position="110"/>
    </location>
    <ligand>
        <name>anthranilate</name>
        <dbReference type="ChEBI" id="CHEBI:16567"/>
        <label>1</label>
    </ligand>
</feature>
<feature type="binding site" evidence="1">
    <location>
        <position position="119"/>
    </location>
    <ligand>
        <name>5-phospho-alpha-D-ribose 1-diphosphate</name>
        <dbReference type="ChEBI" id="CHEBI:58017"/>
    </ligand>
</feature>
<feature type="binding site" evidence="1">
    <location>
        <position position="165"/>
    </location>
    <ligand>
        <name>anthranilate</name>
        <dbReference type="ChEBI" id="CHEBI:16567"/>
        <label>2</label>
    </ligand>
</feature>
<feature type="binding site" evidence="1">
    <location>
        <position position="223"/>
    </location>
    <ligand>
        <name>Mg(2+)</name>
        <dbReference type="ChEBI" id="CHEBI:18420"/>
        <label>2</label>
    </ligand>
</feature>
<feature type="binding site" evidence="1">
    <location>
        <position position="224"/>
    </location>
    <ligand>
        <name>Mg(2+)</name>
        <dbReference type="ChEBI" id="CHEBI:18420"/>
        <label>1</label>
    </ligand>
</feature>
<feature type="binding site" evidence="1">
    <location>
        <position position="224"/>
    </location>
    <ligand>
        <name>Mg(2+)</name>
        <dbReference type="ChEBI" id="CHEBI:18420"/>
        <label>2</label>
    </ligand>
</feature>
<accession>O68426</accession>
<protein>
    <recommendedName>
        <fullName evidence="1">Anthranilate phosphoribosyltransferase</fullName>
        <ecNumber evidence="1">2.4.2.18</ecNumber>
    </recommendedName>
</protein>
<comment type="function">
    <text evidence="1">Catalyzes the transfer of the phosphoribosyl group of 5-phosphorylribose-1-pyrophosphate (PRPP) to anthranilate to yield N-(5'-phosphoribosyl)-anthranilate (PRA).</text>
</comment>
<comment type="catalytic activity">
    <reaction evidence="1">
        <text>N-(5-phospho-beta-D-ribosyl)anthranilate + diphosphate = 5-phospho-alpha-D-ribose 1-diphosphate + anthranilate</text>
        <dbReference type="Rhea" id="RHEA:11768"/>
        <dbReference type="ChEBI" id="CHEBI:16567"/>
        <dbReference type="ChEBI" id="CHEBI:18277"/>
        <dbReference type="ChEBI" id="CHEBI:33019"/>
        <dbReference type="ChEBI" id="CHEBI:58017"/>
        <dbReference type="EC" id="2.4.2.18"/>
    </reaction>
</comment>
<comment type="cofactor">
    <cofactor evidence="1">
        <name>Mg(2+)</name>
        <dbReference type="ChEBI" id="CHEBI:18420"/>
    </cofactor>
    <text evidence="1">Binds 2 magnesium ions per monomer.</text>
</comment>
<comment type="pathway">
    <text evidence="1">Amino-acid biosynthesis; L-tryptophan biosynthesis; L-tryptophan from chorismate: step 2/5.</text>
</comment>
<comment type="subunit">
    <text evidence="1">Homodimer.</text>
</comment>
<comment type="similarity">
    <text evidence="1">Belongs to the anthranilate phosphoribosyltransferase family.</text>
</comment>